<feature type="chain" id="PRO_1000052477" description="Large ribosomal subunit protein uL4">
    <location>
        <begin position="1"/>
        <end position="206"/>
    </location>
</feature>
<feature type="region of interest" description="Disordered" evidence="2">
    <location>
        <begin position="43"/>
        <end position="78"/>
    </location>
</feature>
<feature type="compositionally biased region" description="Basic and acidic residues" evidence="2">
    <location>
        <begin position="49"/>
        <end position="58"/>
    </location>
</feature>
<feature type="compositionally biased region" description="Basic residues" evidence="2">
    <location>
        <begin position="59"/>
        <end position="70"/>
    </location>
</feature>
<sequence>MELKLLQDNGQIGAGVAASAEVFGRDYNEALVHQIVVAYQANARSGNRKQKDREEVKHTTKKPWRQKGTGRARAGMSSSPLWRGGGRIFPNSPEENFSQKVNKKMFRAGMRSIYSQLAREGRINVVDGFAVDAPKTKLLADKFKAMGLDSVLIITDNLDENLYLASRNLPNVAVVEPRHADPLSLVHYKKVLVTKAAVAQIEELLK</sequence>
<organism>
    <name type="scientific">Cupriavidus metallidurans (strain ATCC 43123 / DSM 2839 / NBRC 102507 / CH34)</name>
    <name type="common">Ralstonia metallidurans</name>
    <dbReference type="NCBI Taxonomy" id="266264"/>
    <lineage>
        <taxon>Bacteria</taxon>
        <taxon>Pseudomonadati</taxon>
        <taxon>Pseudomonadota</taxon>
        <taxon>Betaproteobacteria</taxon>
        <taxon>Burkholderiales</taxon>
        <taxon>Burkholderiaceae</taxon>
        <taxon>Cupriavidus</taxon>
    </lineage>
</organism>
<proteinExistence type="inferred from homology"/>
<name>RL4_CUPMC</name>
<dbReference type="EMBL" id="CP000352">
    <property type="protein sequence ID" value="ABF10188.1"/>
    <property type="molecule type" value="Genomic_DNA"/>
</dbReference>
<dbReference type="RefSeq" id="WP_008642923.1">
    <property type="nucleotide sequence ID" value="NC_007973.1"/>
</dbReference>
<dbReference type="SMR" id="Q1LI38"/>
<dbReference type="STRING" id="266264.Rmet_3316"/>
<dbReference type="GeneID" id="60826601"/>
<dbReference type="KEGG" id="rme:Rmet_3316"/>
<dbReference type="eggNOG" id="COG0088">
    <property type="taxonomic scope" value="Bacteria"/>
</dbReference>
<dbReference type="HOGENOM" id="CLU_041575_5_2_4"/>
<dbReference type="Proteomes" id="UP000002429">
    <property type="component" value="Chromosome"/>
</dbReference>
<dbReference type="GO" id="GO:1990904">
    <property type="term" value="C:ribonucleoprotein complex"/>
    <property type="evidence" value="ECO:0007669"/>
    <property type="project" value="UniProtKB-KW"/>
</dbReference>
<dbReference type="GO" id="GO:0005840">
    <property type="term" value="C:ribosome"/>
    <property type="evidence" value="ECO:0007669"/>
    <property type="project" value="UniProtKB-KW"/>
</dbReference>
<dbReference type="GO" id="GO:0019843">
    <property type="term" value="F:rRNA binding"/>
    <property type="evidence" value="ECO:0007669"/>
    <property type="project" value="UniProtKB-UniRule"/>
</dbReference>
<dbReference type="GO" id="GO:0003735">
    <property type="term" value="F:structural constituent of ribosome"/>
    <property type="evidence" value="ECO:0007669"/>
    <property type="project" value="InterPro"/>
</dbReference>
<dbReference type="GO" id="GO:0006412">
    <property type="term" value="P:translation"/>
    <property type="evidence" value="ECO:0007669"/>
    <property type="project" value="UniProtKB-UniRule"/>
</dbReference>
<dbReference type="Gene3D" id="3.40.1370.10">
    <property type="match status" value="1"/>
</dbReference>
<dbReference type="HAMAP" id="MF_01328_B">
    <property type="entry name" value="Ribosomal_uL4_B"/>
    <property type="match status" value="1"/>
</dbReference>
<dbReference type="InterPro" id="IPR002136">
    <property type="entry name" value="Ribosomal_uL4"/>
</dbReference>
<dbReference type="InterPro" id="IPR013005">
    <property type="entry name" value="Ribosomal_uL4-like"/>
</dbReference>
<dbReference type="InterPro" id="IPR023574">
    <property type="entry name" value="Ribosomal_uL4_dom_sf"/>
</dbReference>
<dbReference type="NCBIfam" id="TIGR03953">
    <property type="entry name" value="rplD_bact"/>
    <property type="match status" value="1"/>
</dbReference>
<dbReference type="PANTHER" id="PTHR10746">
    <property type="entry name" value="50S RIBOSOMAL PROTEIN L4"/>
    <property type="match status" value="1"/>
</dbReference>
<dbReference type="PANTHER" id="PTHR10746:SF6">
    <property type="entry name" value="LARGE RIBOSOMAL SUBUNIT PROTEIN UL4M"/>
    <property type="match status" value="1"/>
</dbReference>
<dbReference type="Pfam" id="PF00573">
    <property type="entry name" value="Ribosomal_L4"/>
    <property type="match status" value="1"/>
</dbReference>
<dbReference type="SUPFAM" id="SSF52166">
    <property type="entry name" value="Ribosomal protein L4"/>
    <property type="match status" value="1"/>
</dbReference>
<comment type="function">
    <text evidence="1">One of the primary rRNA binding proteins, this protein initially binds near the 5'-end of the 23S rRNA. It is important during the early stages of 50S assembly. It makes multiple contacts with different domains of the 23S rRNA in the assembled 50S subunit and ribosome.</text>
</comment>
<comment type="function">
    <text evidence="1">Forms part of the polypeptide exit tunnel.</text>
</comment>
<comment type="subunit">
    <text evidence="1">Part of the 50S ribosomal subunit.</text>
</comment>
<comment type="similarity">
    <text evidence="1">Belongs to the universal ribosomal protein uL4 family.</text>
</comment>
<accession>Q1LI38</accession>
<protein>
    <recommendedName>
        <fullName evidence="1">Large ribosomal subunit protein uL4</fullName>
    </recommendedName>
    <alternativeName>
        <fullName evidence="3">50S ribosomal protein L4</fullName>
    </alternativeName>
</protein>
<gene>
    <name evidence="1" type="primary">rplD</name>
    <name type="ordered locus">Rmet_3316</name>
</gene>
<keyword id="KW-1185">Reference proteome</keyword>
<keyword id="KW-0687">Ribonucleoprotein</keyword>
<keyword id="KW-0689">Ribosomal protein</keyword>
<keyword id="KW-0694">RNA-binding</keyword>
<keyword id="KW-0699">rRNA-binding</keyword>
<evidence type="ECO:0000255" key="1">
    <source>
        <dbReference type="HAMAP-Rule" id="MF_01328"/>
    </source>
</evidence>
<evidence type="ECO:0000256" key="2">
    <source>
        <dbReference type="SAM" id="MobiDB-lite"/>
    </source>
</evidence>
<evidence type="ECO:0000305" key="3"/>
<reference key="1">
    <citation type="journal article" date="2010" name="PLoS ONE">
        <title>The complete genome sequence of Cupriavidus metallidurans strain CH34, a master survivalist in harsh and anthropogenic environments.</title>
        <authorList>
            <person name="Janssen P.J."/>
            <person name="Van Houdt R."/>
            <person name="Moors H."/>
            <person name="Monsieurs P."/>
            <person name="Morin N."/>
            <person name="Michaux A."/>
            <person name="Benotmane M.A."/>
            <person name="Leys N."/>
            <person name="Vallaeys T."/>
            <person name="Lapidus A."/>
            <person name="Monchy S."/>
            <person name="Medigue C."/>
            <person name="Taghavi S."/>
            <person name="McCorkle S."/>
            <person name="Dunn J."/>
            <person name="van der Lelie D."/>
            <person name="Mergeay M."/>
        </authorList>
    </citation>
    <scope>NUCLEOTIDE SEQUENCE [LARGE SCALE GENOMIC DNA]</scope>
    <source>
        <strain>ATCC 43123 / DSM 2839 / NBRC 102507 / CH34</strain>
    </source>
</reference>